<evidence type="ECO:0000255" key="1">
    <source>
        <dbReference type="HAMAP-Rule" id="MF_00328"/>
    </source>
</evidence>
<gene>
    <name evidence="1" type="primary">gmk</name>
    <name type="ordered locus">XCV3512</name>
</gene>
<feature type="chain" id="PRO_0000266436" description="Guanylate kinase">
    <location>
        <begin position="1"/>
        <end position="203"/>
    </location>
</feature>
<feature type="domain" description="Guanylate kinase-like" evidence="1">
    <location>
        <begin position="3"/>
        <end position="181"/>
    </location>
</feature>
<feature type="binding site" evidence="1">
    <location>
        <begin position="10"/>
        <end position="17"/>
    </location>
    <ligand>
        <name>ATP</name>
        <dbReference type="ChEBI" id="CHEBI:30616"/>
    </ligand>
</feature>
<sequence length="203" mass="22734">MRGTLYIVAAPSGAGKSSIVNATLARDPKIALSISFTSRAPRPGERHAEHYHFVSADEFQGMIEAGDFFEYALVHGDWKGTARQSVEPQLAAGHDVLLEIDWQGARQVRQKVPDAVSVFILPPSRQALDERMRKRGQDSEDVMAQRLAAAREEMLHFEEFDYVIINETFDIAVAEMCAIFTASRLRRQAQQQRHAGLIQALLE</sequence>
<reference key="1">
    <citation type="journal article" date="2005" name="J. Bacteriol.">
        <title>Insights into genome plasticity and pathogenicity of the plant pathogenic Bacterium Xanthomonas campestris pv. vesicatoria revealed by the complete genome sequence.</title>
        <authorList>
            <person name="Thieme F."/>
            <person name="Koebnik R."/>
            <person name="Bekel T."/>
            <person name="Berger C."/>
            <person name="Boch J."/>
            <person name="Buettner D."/>
            <person name="Caldana C."/>
            <person name="Gaigalat L."/>
            <person name="Goesmann A."/>
            <person name="Kay S."/>
            <person name="Kirchner O."/>
            <person name="Lanz C."/>
            <person name="Linke B."/>
            <person name="McHardy A.C."/>
            <person name="Meyer F."/>
            <person name="Mittenhuber G."/>
            <person name="Nies D.H."/>
            <person name="Niesbach-Kloesgen U."/>
            <person name="Patschkowski T."/>
            <person name="Rueckert C."/>
            <person name="Rupp O."/>
            <person name="Schneiker S."/>
            <person name="Schuster S.C."/>
            <person name="Vorhoelter F.J."/>
            <person name="Weber E."/>
            <person name="Puehler A."/>
            <person name="Bonas U."/>
            <person name="Bartels D."/>
            <person name="Kaiser O."/>
        </authorList>
    </citation>
    <scope>NUCLEOTIDE SEQUENCE [LARGE SCALE GENOMIC DNA]</scope>
    <source>
        <strain>85-10</strain>
    </source>
</reference>
<comment type="function">
    <text evidence="1">Essential for recycling GMP and indirectly, cGMP.</text>
</comment>
<comment type="catalytic activity">
    <reaction evidence="1">
        <text>GMP + ATP = GDP + ADP</text>
        <dbReference type="Rhea" id="RHEA:20780"/>
        <dbReference type="ChEBI" id="CHEBI:30616"/>
        <dbReference type="ChEBI" id="CHEBI:58115"/>
        <dbReference type="ChEBI" id="CHEBI:58189"/>
        <dbReference type="ChEBI" id="CHEBI:456216"/>
        <dbReference type="EC" id="2.7.4.8"/>
    </reaction>
</comment>
<comment type="subcellular location">
    <subcellularLocation>
        <location evidence="1">Cytoplasm</location>
    </subcellularLocation>
</comment>
<comment type="similarity">
    <text evidence="1">Belongs to the guanylate kinase family.</text>
</comment>
<protein>
    <recommendedName>
        <fullName evidence="1">Guanylate kinase</fullName>
        <ecNumber evidence="1">2.7.4.8</ecNumber>
    </recommendedName>
    <alternativeName>
        <fullName evidence="1">GMP kinase</fullName>
    </alternativeName>
</protein>
<organism>
    <name type="scientific">Xanthomonas euvesicatoria pv. vesicatoria (strain 85-10)</name>
    <name type="common">Xanthomonas campestris pv. vesicatoria</name>
    <dbReference type="NCBI Taxonomy" id="316273"/>
    <lineage>
        <taxon>Bacteria</taxon>
        <taxon>Pseudomonadati</taxon>
        <taxon>Pseudomonadota</taxon>
        <taxon>Gammaproteobacteria</taxon>
        <taxon>Lysobacterales</taxon>
        <taxon>Lysobacteraceae</taxon>
        <taxon>Xanthomonas</taxon>
    </lineage>
</organism>
<name>KGUA_XANE5</name>
<dbReference type="EC" id="2.7.4.8" evidence="1"/>
<dbReference type="EMBL" id="AM039952">
    <property type="protein sequence ID" value="CAJ25243.1"/>
    <property type="molecule type" value="Genomic_DNA"/>
</dbReference>
<dbReference type="RefSeq" id="WP_008575828.1">
    <property type="nucleotide sequence ID" value="NZ_CP017190.1"/>
</dbReference>
<dbReference type="SMR" id="Q3BPS0"/>
<dbReference type="STRING" id="456327.BJD11_05180"/>
<dbReference type="GeneID" id="97511589"/>
<dbReference type="KEGG" id="xcv:XCV3512"/>
<dbReference type="eggNOG" id="COG0194">
    <property type="taxonomic scope" value="Bacteria"/>
</dbReference>
<dbReference type="HOGENOM" id="CLU_001715_1_0_6"/>
<dbReference type="Proteomes" id="UP000007069">
    <property type="component" value="Chromosome"/>
</dbReference>
<dbReference type="GO" id="GO:0005829">
    <property type="term" value="C:cytosol"/>
    <property type="evidence" value="ECO:0007669"/>
    <property type="project" value="TreeGrafter"/>
</dbReference>
<dbReference type="GO" id="GO:0005524">
    <property type="term" value="F:ATP binding"/>
    <property type="evidence" value="ECO:0007669"/>
    <property type="project" value="UniProtKB-UniRule"/>
</dbReference>
<dbReference type="GO" id="GO:0004385">
    <property type="term" value="F:guanylate kinase activity"/>
    <property type="evidence" value="ECO:0007669"/>
    <property type="project" value="UniProtKB-UniRule"/>
</dbReference>
<dbReference type="CDD" id="cd00071">
    <property type="entry name" value="GMPK"/>
    <property type="match status" value="1"/>
</dbReference>
<dbReference type="FunFam" id="3.30.63.10:FF:000005">
    <property type="entry name" value="Guanylate kinase"/>
    <property type="match status" value="1"/>
</dbReference>
<dbReference type="Gene3D" id="3.30.63.10">
    <property type="entry name" value="Guanylate Kinase phosphate binding domain"/>
    <property type="match status" value="1"/>
</dbReference>
<dbReference type="Gene3D" id="3.40.50.300">
    <property type="entry name" value="P-loop containing nucleotide triphosphate hydrolases"/>
    <property type="match status" value="1"/>
</dbReference>
<dbReference type="HAMAP" id="MF_00328">
    <property type="entry name" value="Guanylate_kinase"/>
    <property type="match status" value="1"/>
</dbReference>
<dbReference type="InterPro" id="IPR008145">
    <property type="entry name" value="GK/Ca_channel_bsu"/>
</dbReference>
<dbReference type="InterPro" id="IPR008144">
    <property type="entry name" value="Guanylate_kin-like_dom"/>
</dbReference>
<dbReference type="InterPro" id="IPR017665">
    <property type="entry name" value="Guanylate_kinase"/>
</dbReference>
<dbReference type="InterPro" id="IPR020590">
    <property type="entry name" value="Guanylate_kinase_CS"/>
</dbReference>
<dbReference type="InterPro" id="IPR027417">
    <property type="entry name" value="P-loop_NTPase"/>
</dbReference>
<dbReference type="NCBIfam" id="TIGR03263">
    <property type="entry name" value="guanyl_kin"/>
    <property type="match status" value="1"/>
</dbReference>
<dbReference type="PANTHER" id="PTHR23117:SF13">
    <property type="entry name" value="GUANYLATE KINASE"/>
    <property type="match status" value="1"/>
</dbReference>
<dbReference type="PANTHER" id="PTHR23117">
    <property type="entry name" value="GUANYLATE KINASE-RELATED"/>
    <property type="match status" value="1"/>
</dbReference>
<dbReference type="Pfam" id="PF00625">
    <property type="entry name" value="Guanylate_kin"/>
    <property type="match status" value="1"/>
</dbReference>
<dbReference type="SMART" id="SM00072">
    <property type="entry name" value="GuKc"/>
    <property type="match status" value="1"/>
</dbReference>
<dbReference type="SUPFAM" id="SSF52540">
    <property type="entry name" value="P-loop containing nucleoside triphosphate hydrolases"/>
    <property type="match status" value="1"/>
</dbReference>
<dbReference type="PROSITE" id="PS00856">
    <property type="entry name" value="GUANYLATE_KINASE_1"/>
    <property type="match status" value="1"/>
</dbReference>
<dbReference type="PROSITE" id="PS50052">
    <property type="entry name" value="GUANYLATE_KINASE_2"/>
    <property type="match status" value="1"/>
</dbReference>
<proteinExistence type="inferred from homology"/>
<keyword id="KW-0067">ATP-binding</keyword>
<keyword id="KW-0963">Cytoplasm</keyword>
<keyword id="KW-0418">Kinase</keyword>
<keyword id="KW-0547">Nucleotide-binding</keyword>
<keyword id="KW-0808">Transferase</keyword>
<accession>Q3BPS0</accession>